<reference key="1">
    <citation type="journal article" date="2005" name="Genome Res.">
        <title>Sequence, annotation, and analysis of synteny between rice chromosome 3 and diverged grass species.</title>
        <authorList>
            <consortium name="The rice chromosome 3 sequencing consortium"/>
            <person name="Buell C.R."/>
            <person name="Yuan Q."/>
            <person name="Ouyang S."/>
            <person name="Liu J."/>
            <person name="Zhu W."/>
            <person name="Wang A."/>
            <person name="Maiti R."/>
            <person name="Haas B."/>
            <person name="Wortman J."/>
            <person name="Pertea M."/>
            <person name="Jones K.M."/>
            <person name="Kim M."/>
            <person name="Overton L."/>
            <person name="Tsitrin T."/>
            <person name="Fadrosh D."/>
            <person name="Bera J."/>
            <person name="Weaver B."/>
            <person name="Jin S."/>
            <person name="Johri S."/>
            <person name="Reardon M."/>
            <person name="Webb K."/>
            <person name="Hill J."/>
            <person name="Moffat K."/>
            <person name="Tallon L."/>
            <person name="Van Aken S."/>
            <person name="Lewis M."/>
            <person name="Utterback T."/>
            <person name="Feldblyum T."/>
            <person name="Zismann V."/>
            <person name="Iobst S."/>
            <person name="Hsiao J."/>
            <person name="de Vazeille A.R."/>
            <person name="Salzberg S.L."/>
            <person name="White O."/>
            <person name="Fraser C.M."/>
            <person name="Yu Y."/>
            <person name="Kim H."/>
            <person name="Rambo T."/>
            <person name="Currie J."/>
            <person name="Collura K."/>
            <person name="Kernodle-Thompson S."/>
            <person name="Wei F."/>
            <person name="Kudrna K."/>
            <person name="Ammiraju J.S.S."/>
            <person name="Luo M."/>
            <person name="Goicoechea J.L."/>
            <person name="Wing R.A."/>
            <person name="Henry D."/>
            <person name="Oates R."/>
            <person name="Palmer M."/>
            <person name="Pries G."/>
            <person name="Saski C."/>
            <person name="Simmons J."/>
            <person name="Soderlund C."/>
            <person name="Nelson W."/>
            <person name="de la Bastide M."/>
            <person name="Spiegel L."/>
            <person name="Nascimento L."/>
            <person name="Huang E."/>
            <person name="Preston R."/>
            <person name="Zutavern T."/>
            <person name="Palmer L."/>
            <person name="O'Shaughnessy A."/>
            <person name="Dike S."/>
            <person name="McCombie W.R."/>
            <person name="Minx P."/>
            <person name="Cordum H."/>
            <person name="Wilson R."/>
            <person name="Jin W."/>
            <person name="Lee H.R."/>
            <person name="Jiang J."/>
            <person name="Jackson S."/>
        </authorList>
    </citation>
    <scope>NUCLEOTIDE SEQUENCE [LARGE SCALE GENOMIC DNA]</scope>
    <source>
        <strain>cv. Nipponbare</strain>
    </source>
</reference>
<reference key="2">
    <citation type="journal article" date="2005" name="Nature">
        <title>The map-based sequence of the rice genome.</title>
        <authorList>
            <consortium name="International rice genome sequencing project (IRGSP)"/>
        </authorList>
    </citation>
    <scope>NUCLEOTIDE SEQUENCE [LARGE SCALE GENOMIC DNA]</scope>
    <source>
        <strain>cv. Nipponbare</strain>
    </source>
</reference>
<reference key="3">
    <citation type="journal article" date="2008" name="Nucleic Acids Res.">
        <title>The rice annotation project database (RAP-DB): 2008 update.</title>
        <authorList>
            <consortium name="The rice annotation project (RAP)"/>
        </authorList>
    </citation>
    <scope>GENOME REANNOTATION</scope>
    <source>
        <strain>cv. Nipponbare</strain>
    </source>
</reference>
<reference key="4">
    <citation type="journal article" date="2013" name="Rice">
        <title>Improvement of the Oryza sativa Nipponbare reference genome using next generation sequence and optical map data.</title>
        <authorList>
            <person name="Kawahara Y."/>
            <person name="de la Bastide M."/>
            <person name="Hamilton J.P."/>
            <person name="Kanamori H."/>
            <person name="McCombie W.R."/>
            <person name="Ouyang S."/>
            <person name="Schwartz D.C."/>
            <person name="Tanaka T."/>
            <person name="Wu J."/>
            <person name="Zhou S."/>
            <person name="Childs K.L."/>
            <person name="Davidson R.M."/>
            <person name="Lin H."/>
            <person name="Quesada-Ocampo L."/>
            <person name="Vaillancourt B."/>
            <person name="Sakai H."/>
            <person name="Lee S.S."/>
            <person name="Kim J."/>
            <person name="Numa H."/>
            <person name="Itoh T."/>
            <person name="Buell C.R."/>
            <person name="Matsumoto T."/>
        </authorList>
    </citation>
    <scope>GENOME REANNOTATION</scope>
    <source>
        <strain>cv. Nipponbare</strain>
    </source>
</reference>
<reference key="5">
    <citation type="journal article" date="2005" name="PLoS Biol.">
        <title>The genomes of Oryza sativa: a history of duplications.</title>
        <authorList>
            <person name="Yu J."/>
            <person name="Wang J."/>
            <person name="Lin W."/>
            <person name="Li S."/>
            <person name="Li H."/>
            <person name="Zhou J."/>
            <person name="Ni P."/>
            <person name="Dong W."/>
            <person name="Hu S."/>
            <person name="Zeng C."/>
            <person name="Zhang J."/>
            <person name="Zhang Y."/>
            <person name="Li R."/>
            <person name="Xu Z."/>
            <person name="Li S."/>
            <person name="Li X."/>
            <person name="Zheng H."/>
            <person name="Cong L."/>
            <person name="Lin L."/>
            <person name="Yin J."/>
            <person name="Geng J."/>
            <person name="Li G."/>
            <person name="Shi J."/>
            <person name="Liu J."/>
            <person name="Lv H."/>
            <person name="Li J."/>
            <person name="Wang J."/>
            <person name="Deng Y."/>
            <person name="Ran L."/>
            <person name="Shi X."/>
            <person name="Wang X."/>
            <person name="Wu Q."/>
            <person name="Li C."/>
            <person name="Ren X."/>
            <person name="Wang J."/>
            <person name="Wang X."/>
            <person name="Li D."/>
            <person name="Liu D."/>
            <person name="Zhang X."/>
            <person name="Ji Z."/>
            <person name="Zhao W."/>
            <person name="Sun Y."/>
            <person name="Zhang Z."/>
            <person name="Bao J."/>
            <person name="Han Y."/>
            <person name="Dong L."/>
            <person name="Ji J."/>
            <person name="Chen P."/>
            <person name="Wu S."/>
            <person name="Liu J."/>
            <person name="Xiao Y."/>
            <person name="Bu D."/>
            <person name="Tan J."/>
            <person name="Yang L."/>
            <person name="Ye C."/>
            <person name="Zhang J."/>
            <person name="Xu J."/>
            <person name="Zhou Y."/>
            <person name="Yu Y."/>
            <person name="Zhang B."/>
            <person name="Zhuang S."/>
            <person name="Wei H."/>
            <person name="Liu B."/>
            <person name="Lei M."/>
            <person name="Yu H."/>
            <person name="Li Y."/>
            <person name="Xu H."/>
            <person name="Wei S."/>
            <person name="He X."/>
            <person name="Fang L."/>
            <person name="Zhang Z."/>
            <person name="Zhang Y."/>
            <person name="Huang X."/>
            <person name="Su Z."/>
            <person name="Tong W."/>
            <person name="Li J."/>
            <person name="Tong Z."/>
            <person name="Li S."/>
            <person name="Ye J."/>
            <person name="Wang L."/>
            <person name="Fang L."/>
            <person name="Lei T."/>
            <person name="Chen C.-S."/>
            <person name="Chen H.-C."/>
            <person name="Xu Z."/>
            <person name="Li H."/>
            <person name="Huang H."/>
            <person name="Zhang F."/>
            <person name="Xu H."/>
            <person name="Li N."/>
            <person name="Zhao C."/>
            <person name="Li S."/>
            <person name="Dong L."/>
            <person name="Huang Y."/>
            <person name="Li L."/>
            <person name="Xi Y."/>
            <person name="Qi Q."/>
            <person name="Li W."/>
            <person name="Zhang B."/>
            <person name="Hu W."/>
            <person name="Zhang Y."/>
            <person name="Tian X."/>
            <person name="Jiao Y."/>
            <person name="Liang X."/>
            <person name="Jin J."/>
            <person name="Gao L."/>
            <person name="Zheng W."/>
            <person name="Hao B."/>
            <person name="Liu S.-M."/>
            <person name="Wang W."/>
            <person name="Yuan L."/>
            <person name="Cao M."/>
            <person name="McDermott J."/>
            <person name="Samudrala R."/>
            <person name="Wang J."/>
            <person name="Wong G.K.-S."/>
            <person name="Yang H."/>
        </authorList>
    </citation>
    <scope>NUCLEOTIDE SEQUENCE [LARGE SCALE GENOMIC DNA]</scope>
    <source>
        <strain>cv. Nipponbare</strain>
    </source>
</reference>
<reference key="6">
    <citation type="journal article" date="2003" name="Science">
        <title>Collection, mapping, and annotation of over 28,000 cDNA clones from japonica rice.</title>
        <authorList>
            <consortium name="The rice full-length cDNA consortium"/>
        </authorList>
    </citation>
    <scope>NUCLEOTIDE SEQUENCE [LARGE SCALE MRNA]</scope>
    <source>
        <strain>cv. Nipponbare</strain>
    </source>
</reference>
<reference key="7">
    <citation type="journal article" date="2005" name="Gene">
        <title>Characterization of the origin recognition complex (ORC) from a higher plant, rice (Oryza sativa L.).</title>
        <authorList>
            <person name="Mori Y."/>
            <person name="Yamamoto T."/>
            <person name="Sakaguchi N."/>
            <person name="Ishibashi T."/>
            <person name="Furukawa T."/>
            <person name="Kadota Y."/>
            <person name="Kuchitsu K."/>
            <person name="Hashimoto J."/>
            <person name="Kimura S."/>
            <person name="Sakaguchi K."/>
        </authorList>
    </citation>
    <scope>NUCLEOTIDE SEQUENCE [MRNA] OF 72-524</scope>
    <scope>INDUCTION BY SUCROSE</scope>
    <scope>TISSUE SPECIFICITY</scope>
    <scope>GENE FAMILY</scope>
    <scope>NOMENCLATURE</scope>
</reference>
<reference key="8">
    <citation type="journal article" date="2007" name="Plant Physiol.">
        <title>Genome-wide analysis of the core DNA replication machinery in the higher plants Arabidopsis and rice.</title>
        <authorList>
            <person name="Shultz R.W."/>
            <person name="Tatineni V.M."/>
            <person name="Hanley-Bowdoin L."/>
            <person name="Thompson W.F."/>
        </authorList>
    </citation>
    <scope>REVIEW ON THE CORE DNA REPLICATION MACHINERY</scope>
</reference>
<sequence length="524" mass="57388">MSQPVTPRRTTRSSASASPSPAPASPTSPPKSRPKPSPRRQLLAAAAAPPKEDGSSADALLAELPGRRAQAMDILRLLAPAPALPLMLHGGAATGKTRALLLALRYLRPSQRLVYAALRSLPSPRALFASLLSQLSATPFSTSSRHRVPDKPSDFVAALRDALNGIVSQGEVVYLVFDNLEVVRSWDKGGQLLPLLLRLHDLLQLPQVVLVYVSSATPDAYYSMTGSVEPNYVYFPDYTVDEVRDILMHDHPNPKLYSSFLSVALKPLFRVTRRVDELSAVLEPLFRRYCEPLGDLKAVPDEGMKRRLFEHVQSHLAVALNETFNVPMRASMDEIKDGGSAGKGSAKRQFAGKDGLSSELEFHMSVSAKYLLLSAFLASRNPATLDAALFDSTGGLDNRKRKRKSSQASMHMKDTIVEEMLMKGPGTFPLERLLAIFQCITSVSEDILDEIDCPGNMASESGTTGLMSDVLLQLSTLCNSNFLSKSRSCPLEGSARYRSNIDEDLALKVARSVNFPLSKYMYRR</sequence>
<gene>
    <name evidence="6" type="primary">ORC5</name>
    <name evidence="7" type="ordered locus">LOC_Os03g55200</name>
    <name evidence="7" type="ordered locus">Os03g0759500</name>
    <name evidence="9" type="ORF">OsJ_12664</name>
    <name evidence="8" type="ORF">OSJNBb0048A17.14</name>
</gene>
<evidence type="ECO:0000250" key="1">
    <source>
        <dbReference type="UniProtKB" id="O43913"/>
    </source>
</evidence>
<evidence type="ECO:0000250" key="2">
    <source>
        <dbReference type="UniProtKB" id="Q6EWX0"/>
    </source>
</evidence>
<evidence type="ECO:0000255" key="3"/>
<evidence type="ECO:0000256" key="4">
    <source>
        <dbReference type="SAM" id="MobiDB-lite"/>
    </source>
</evidence>
<evidence type="ECO:0000269" key="5">
    <source>
    </source>
</evidence>
<evidence type="ECO:0000303" key="6">
    <source>
    </source>
</evidence>
<evidence type="ECO:0000305" key="7"/>
<evidence type="ECO:0000312" key="8">
    <source>
        <dbReference type="EMBL" id="AAK63931.1"/>
    </source>
</evidence>
<evidence type="ECO:0000312" key="9">
    <source>
        <dbReference type="EMBL" id="EEE59967.1"/>
    </source>
</evidence>
<evidence type="ECO:0000312" key="10">
    <source>
        <dbReference type="Proteomes" id="UP000059680"/>
    </source>
</evidence>
<comment type="function">
    <text evidence="1">Component of the origin recognition complex (ORC) that binds origins of replication. DNA-binding is ATP-dependent. The specific DNA sequences that define origins of replication have not been identified yet. ORC is required to assemble the pre-replication complex necessary to initiate DNA replication.</text>
</comment>
<comment type="subunit">
    <text evidence="2">Component of the origin recognition complex (ORC) composed of at least ORC1, ORC2, ORC3, ORC4, ORC5 and ORC6. ORC is regulated in a cell-cycle and development dependent manner. It is sequentially assembled at the exit from anaphase of mitosis and disassembled as cells enter S phase.</text>
</comment>
<comment type="subcellular location">
    <subcellularLocation>
        <location evidence="1">Nucleus</location>
    </subcellularLocation>
</comment>
<comment type="tissue specificity">
    <text evidence="5">Expressed at low levels in the shoot apical meristem (SAM), leaves, ears and roots.</text>
</comment>
<comment type="induction">
    <text evidence="5">Reduced expression upon sucrose depletion-mediated cell proliferation arrest, and accumulates after sucrose treatment.</text>
</comment>
<comment type="similarity">
    <text evidence="7">Belongs to the ORC5 family.</text>
</comment>
<comment type="sequence caution" evidence="7">
    <conflict type="erroneous initiation">
        <sequence resource="EMBL-CDS" id="AAK63931"/>
    </conflict>
    <text>Truncated N-terminus.</text>
</comment>
<accession>Q10CI8</accession>
<accession>A0A0P0W393</accession>
<accession>B9F5T4</accession>
<accession>Q852R2</accession>
<accession>Q94HA9</accession>
<keyword id="KW-0067">ATP-binding</keyword>
<keyword id="KW-0235">DNA replication</keyword>
<keyword id="KW-0547">Nucleotide-binding</keyword>
<keyword id="KW-0539">Nucleus</keyword>
<keyword id="KW-1185">Reference proteome</keyword>
<dbReference type="EMBL" id="AC084282">
    <property type="protein sequence ID" value="AAK63931.1"/>
    <property type="status" value="ALT_INIT"/>
    <property type="molecule type" value="Genomic_DNA"/>
</dbReference>
<dbReference type="EMBL" id="DP000009">
    <property type="protein sequence ID" value="ABF98992.1"/>
    <property type="molecule type" value="Genomic_DNA"/>
</dbReference>
<dbReference type="EMBL" id="AP008209">
    <property type="protein sequence ID" value="BAF13253.1"/>
    <property type="molecule type" value="Genomic_DNA"/>
</dbReference>
<dbReference type="EMBL" id="AP014959">
    <property type="protein sequence ID" value="BAS86494.1"/>
    <property type="molecule type" value="Genomic_DNA"/>
</dbReference>
<dbReference type="EMBL" id="CM000140">
    <property type="protein sequence ID" value="EEE59967.1"/>
    <property type="molecule type" value="Genomic_DNA"/>
</dbReference>
<dbReference type="EMBL" id="AK063449">
    <property type="protein sequence ID" value="BAG88711.1"/>
    <property type="molecule type" value="mRNA"/>
</dbReference>
<dbReference type="EMBL" id="AB099524">
    <property type="protein sequence ID" value="BAC55229.1"/>
    <property type="molecule type" value="mRNA"/>
</dbReference>
<dbReference type="RefSeq" id="XP_015629337.1">
    <property type="nucleotide sequence ID" value="XM_015773851.1"/>
</dbReference>
<dbReference type="SMR" id="Q10CI8"/>
<dbReference type="FunCoup" id="Q10CI8">
    <property type="interactions" value="2474"/>
</dbReference>
<dbReference type="STRING" id="39947.Q10CI8"/>
<dbReference type="PaxDb" id="39947-Q10CI8"/>
<dbReference type="EnsemblPlants" id="Os03t0759500-01">
    <property type="protein sequence ID" value="Os03t0759500-01"/>
    <property type="gene ID" value="Os03g0759500"/>
</dbReference>
<dbReference type="Gramene" id="Os03t0759500-01">
    <property type="protein sequence ID" value="Os03t0759500-01"/>
    <property type="gene ID" value="Os03g0759500"/>
</dbReference>
<dbReference type="KEGG" id="dosa:Os03g0759500"/>
<dbReference type="eggNOG" id="KOG2543">
    <property type="taxonomic scope" value="Eukaryota"/>
</dbReference>
<dbReference type="HOGENOM" id="CLU_028223_1_0_1"/>
<dbReference type="InParanoid" id="Q10CI8"/>
<dbReference type="OMA" id="QLRRWHG"/>
<dbReference type="OrthoDB" id="365981at2759"/>
<dbReference type="PlantReactome" id="R-OSA-9640882">
    <property type="pathway name" value="Assembly of pre-replication complex"/>
</dbReference>
<dbReference type="PlantReactome" id="R-OSA-9645850">
    <property type="pathway name" value="Activation of pre-replication complex"/>
</dbReference>
<dbReference type="Proteomes" id="UP000000763">
    <property type="component" value="Chromosome 3"/>
</dbReference>
<dbReference type="Proteomes" id="UP000007752">
    <property type="component" value="Chromosome 3"/>
</dbReference>
<dbReference type="Proteomes" id="UP000059680">
    <property type="component" value="Chromosome 3"/>
</dbReference>
<dbReference type="GO" id="GO:0005664">
    <property type="term" value="C:nuclear origin of replication recognition complex"/>
    <property type="evidence" value="ECO:0000318"/>
    <property type="project" value="GO_Central"/>
</dbReference>
<dbReference type="GO" id="GO:0005524">
    <property type="term" value="F:ATP binding"/>
    <property type="evidence" value="ECO:0007669"/>
    <property type="project" value="UniProtKB-KW"/>
</dbReference>
<dbReference type="GO" id="GO:0003688">
    <property type="term" value="F:DNA replication origin binding"/>
    <property type="evidence" value="ECO:0000318"/>
    <property type="project" value="GO_Central"/>
</dbReference>
<dbReference type="GO" id="GO:0006270">
    <property type="term" value="P:DNA replication initiation"/>
    <property type="evidence" value="ECO:0000318"/>
    <property type="project" value="GO_Central"/>
</dbReference>
<dbReference type="GO" id="GO:0009744">
    <property type="term" value="P:response to sucrose"/>
    <property type="evidence" value="ECO:0000314"/>
    <property type="project" value="UniProtKB"/>
</dbReference>
<dbReference type="FunFam" id="3.40.50.300:FF:002111">
    <property type="entry name" value="Origin of replication complex subunit 1"/>
    <property type="match status" value="1"/>
</dbReference>
<dbReference type="Gene3D" id="1.10.8.60">
    <property type="match status" value="1"/>
</dbReference>
<dbReference type="Gene3D" id="3.40.50.300">
    <property type="entry name" value="P-loop containing nucleotide triphosphate hydrolases"/>
    <property type="match status" value="1"/>
</dbReference>
<dbReference type="InterPro" id="IPR041664">
    <property type="entry name" value="AAA_16"/>
</dbReference>
<dbReference type="InterPro" id="IPR020796">
    <property type="entry name" value="ORC5"/>
</dbReference>
<dbReference type="InterPro" id="IPR047088">
    <property type="entry name" value="ORC5_C"/>
</dbReference>
<dbReference type="InterPro" id="IPR048866">
    <property type="entry name" value="ORC5_lid"/>
</dbReference>
<dbReference type="InterPro" id="IPR027417">
    <property type="entry name" value="P-loop_NTPase"/>
</dbReference>
<dbReference type="PANTHER" id="PTHR12705">
    <property type="entry name" value="ORIGIN RECOGNITION COMPLEX SUBUNIT 5"/>
    <property type="match status" value="1"/>
</dbReference>
<dbReference type="PANTHER" id="PTHR12705:SF0">
    <property type="entry name" value="ORIGIN RECOGNITION COMPLEX SUBUNIT 5"/>
    <property type="match status" value="1"/>
</dbReference>
<dbReference type="Pfam" id="PF13191">
    <property type="entry name" value="AAA_16"/>
    <property type="match status" value="1"/>
</dbReference>
<dbReference type="Pfam" id="PF14630">
    <property type="entry name" value="ORC5_C"/>
    <property type="match status" value="1"/>
</dbReference>
<dbReference type="Pfam" id="PF21639">
    <property type="entry name" value="ORC5_lid"/>
    <property type="match status" value="1"/>
</dbReference>
<dbReference type="SUPFAM" id="SSF52540">
    <property type="entry name" value="P-loop containing nucleoside triphosphate hydrolases"/>
    <property type="match status" value="1"/>
</dbReference>
<organism evidence="10">
    <name type="scientific">Oryza sativa subsp. japonica</name>
    <name type="common">Rice</name>
    <dbReference type="NCBI Taxonomy" id="39947"/>
    <lineage>
        <taxon>Eukaryota</taxon>
        <taxon>Viridiplantae</taxon>
        <taxon>Streptophyta</taxon>
        <taxon>Embryophyta</taxon>
        <taxon>Tracheophyta</taxon>
        <taxon>Spermatophyta</taxon>
        <taxon>Magnoliopsida</taxon>
        <taxon>Liliopsida</taxon>
        <taxon>Poales</taxon>
        <taxon>Poaceae</taxon>
        <taxon>BOP clade</taxon>
        <taxon>Oryzoideae</taxon>
        <taxon>Oryzeae</taxon>
        <taxon>Oryzinae</taxon>
        <taxon>Oryza</taxon>
        <taxon>Oryza sativa</taxon>
    </lineage>
</organism>
<proteinExistence type="evidence at transcript level"/>
<name>ORC5_ORYSJ</name>
<feature type="chain" id="PRO_0000431436" description="Origin of replication complex subunit 1">
    <location>
        <begin position="1"/>
        <end position="524"/>
    </location>
</feature>
<feature type="region of interest" description="Disordered" evidence="4">
    <location>
        <begin position="1"/>
        <end position="56"/>
    </location>
</feature>
<feature type="compositionally biased region" description="Low complexity" evidence="4">
    <location>
        <begin position="1"/>
        <end position="19"/>
    </location>
</feature>
<feature type="compositionally biased region" description="Pro residues" evidence="4">
    <location>
        <begin position="20"/>
        <end position="31"/>
    </location>
</feature>
<feature type="compositionally biased region" description="Low complexity" evidence="4">
    <location>
        <begin position="39"/>
        <end position="49"/>
    </location>
</feature>
<feature type="binding site" evidence="3">
    <location>
        <begin position="90"/>
        <end position="97"/>
    </location>
    <ligand>
        <name>ATP</name>
        <dbReference type="ChEBI" id="CHEBI:30616"/>
    </ligand>
</feature>
<feature type="sequence conflict" description="In Ref. 5; EEE59967." evidence="7" ref="5">
    <original>A</original>
    <variation>E</variation>
    <location>
        <position position="48"/>
    </location>
</feature>
<feature type="sequence conflict" description="In Ref. 7; BAC55229." evidence="7" ref="7">
    <original>V</original>
    <variation>F</variation>
    <location>
        <position position="208"/>
    </location>
</feature>
<feature type="sequence conflict" description="In Ref. 7; BAC55229." evidence="7" ref="7">
    <original>G</original>
    <variation>D</variation>
    <location>
        <position position="455"/>
    </location>
</feature>
<protein>
    <recommendedName>
        <fullName evidence="6">Origin of replication complex subunit 1</fullName>
        <shortName evidence="6">OsORC1</shortName>
    </recommendedName>
</protein>